<sequence length="184" mass="20808">MALPVSLLMALVVLSCHSICSLGCDLPHTHSLGNTRVLMLLGQMRRISPFSCLKDRNDFGFPQEVFDGNQFRKPQAISAVHETIQQIFHLFSTDGSSAAWDESLLDKLYTGLYQQLTELEACLSQEVGVEETPLMNEDSLLAVRRYFQRIALYLQEKKYSPCAWEIVRAEIMRSFSSSTNLPQS</sequence>
<dbReference type="EMBL" id="M14540">
    <property type="protein sequence ID" value="AAA30953.1"/>
    <property type="molecule type" value="Genomic_DNA"/>
</dbReference>
<dbReference type="PIR" id="A24912">
    <property type="entry name" value="IVHOA1"/>
</dbReference>
<dbReference type="RefSeq" id="XP_003364009.1">
    <property type="nucleotide sequence ID" value="XM_003363961.4"/>
</dbReference>
<dbReference type="SMR" id="P05003"/>
<dbReference type="FunCoup" id="P05003">
    <property type="interactions" value="281"/>
</dbReference>
<dbReference type="STRING" id="9796.ENSECAP00000042726"/>
<dbReference type="PaxDb" id="9796-ENSECAP00000042726"/>
<dbReference type="GeneID" id="100629951"/>
<dbReference type="KEGG" id="ecb:100629951"/>
<dbReference type="HOGENOM" id="CLU_109427_1_0_1"/>
<dbReference type="InParanoid" id="P05003"/>
<dbReference type="OMA" id="KYSSAAW"/>
<dbReference type="OrthoDB" id="9481177at2759"/>
<dbReference type="TreeFam" id="TF336177"/>
<dbReference type="Proteomes" id="UP000002281">
    <property type="component" value="Chromosome 23"/>
</dbReference>
<dbReference type="GO" id="GO:0005615">
    <property type="term" value="C:extracellular space"/>
    <property type="evidence" value="ECO:0000318"/>
    <property type="project" value="GO_Central"/>
</dbReference>
<dbReference type="GO" id="GO:0005125">
    <property type="term" value="F:cytokine activity"/>
    <property type="evidence" value="ECO:0000318"/>
    <property type="project" value="GO_Central"/>
</dbReference>
<dbReference type="GO" id="GO:0005132">
    <property type="term" value="F:type I interferon receptor binding"/>
    <property type="evidence" value="ECO:0000318"/>
    <property type="project" value="GO_Central"/>
</dbReference>
<dbReference type="GO" id="GO:0002250">
    <property type="term" value="P:adaptive immune response"/>
    <property type="evidence" value="ECO:0000318"/>
    <property type="project" value="GO_Central"/>
</dbReference>
<dbReference type="GO" id="GO:0002312">
    <property type="term" value="P:B cell activation involved in immune response"/>
    <property type="evidence" value="ECO:0000318"/>
    <property type="project" value="GO_Central"/>
</dbReference>
<dbReference type="GO" id="GO:0051607">
    <property type="term" value="P:defense response to virus"/>
    <property type="evidence" value="ECO:0007669"/>
    <property type="project" value="UniProtKB-KW"/>
</dbReference>
<dbReference type="GO" id="GO:0006959">
    <property type="term" value="P:humoral immune response"/>
    <property type="evidence" value="ECO:0000318"/>
    <property type="project" value="GO_Central"/>
</dbReference>
<dbReference type="GO" id="GO:0002323">
    <property type="term" value="P:natural killer cell activation involved in immune response"/>
    <property type="evidence" value="ECO:0000318"/>
    <property type="project" value="GO_Central"/>
</dbReference>
<dbReference type="GO" id="GO:0043330">
    <property type="term" value="P:response to exogenous dsRNA"/>
    <property type="evidence" value="ECO:0000318"/>
    <property type="project" value="GO_Central"/>
</dbReference>
<dbReference type="GO" id="GO:0002286">
    <property type="term" value="P:T cell activation involved in immune response"/>
    <property type="evidence" value="ECO:0000318"/>
    <property type="project" value="GO_Central"/>
</dbReference>
<dbReference type="GO" id="GO:0060337">
    <property type="term" value="P:type I interferon-mediated signaling pathway"/>
    <property type="evidence" value="ECO:0000318"/>
    <property type="project" value="GO_Central"/>
</dbReference>
<dbReference type="CDD" id="cd00095">
    <property type="entry name" value="IFab"/>
    <property type="match status" value="1"/>
</dbReference>
<dbReference type="FunFam" id="1.20.1250.10:FF:000001">
    <property type="entry name" value="Interferon alpha"/>
    <property type="match status" value="1"/>
</dbReference>
<dbReference type="Gene3D" id="1.20.1250.10">
    <property type="match status" value="1"/>
</dbReference>
<dbReference type="InterPro" id="IPR009079">
    <property type="entry name" value="4_helix_cytokine-like_core"/>
</dbReference>
<dbReference type="InterPro" id="IPR000471">
    <property type="entry name" value="Interferon_alpha/beta/delta"/>
</dbReference>
<dbReference type="PANTHER" id="PTHR11691:SF60">
    <property type="entry name" value="INTERFERON ALPHA-5"/>
    <property type="match status" value="1"/>
</dbReference>
<dbReference type="PANTHER" id="PTHR11691">
    <property type="entry name" value="TYPE I INTERFERON"/>
    <property type="match status" value="1"/>
</dbReference>
<dbReference type="Pfam" id="PF00143">
    <property type="entry name" value="Interferon"/>
    <property type="match status" value="1"/>
</dbReference>
<dbReference type="PRINTS" id="PR00266">
    <property type="entry name" value="INTERFERONAB"/>
</dbReference>
<dbReference type="SMART" id="SM00076">
    <property type="entry name" value="IFabd"/>
    <property type="match status" value="1"/>
</dbReference>
<dbReference type="SUPFAM" id="SSF47266">
    <property type="entry name" value="4-helical cytokines"/>
    <property type="match status" value="1"/>
</dbReference>
<dbReference type="PROSITE" id="PS00252">
    <property type="entry name" value="INTERFERON_A_B_D"/>
    <property type="match status" value="1"/>
</dbReference>
<name>IFNA1_HORSE</name>
<organism>
    <name type="scientific">Equus caballus</name>
    <name type="common">Horse</name>
    <dbReference type="NCBI Taxonomy" id="9796"/>
    <lineage>
        <taxon>Eukaryota</taxon>
        <taxon>Metazoa</taxon>
        <taxon>Chordata</taxon>
        <taxon>Craniata</taxon>
        <taxon>Vertebrata</taxon>
        <taxon>Euteleostomi</taxon>
        <taxon>Mammalia</taxon>
        <taxon>Eutheria</taxon>
        <taxon>Laurasiatheria</taxon>
        <taxon>Perissodactyla</taxon>
        <taxon>Equidae</taxon>
        <taxon>Equus</taxon>
    </lineage>
</organism>
<comment type="function">
    <text>Produced by macrophages, IFN-alpha have antiviral activities. Interferon stimulates the production of two enzymes: a protein kinase and an oligoadenylate synthetase.</text>
</comment>
<comment type="subunit">
    <text evidence="2">Interacts with CR2.</text>
</comment>
<comment type="subcellular location">
    <subcellularLocation>
        <location>Secreted</location>
    </subcellularLocation>
</comment>
<comment type="similarity">
    <text evidence="3">Belongs to the alpha/beta interferon family.</text>
</comment>
<keyword id="KW-0051">Antiviral defense</keyword>
<keyword id="KW-0202">Cytokine</keyword>
<keyword id="KW-1015">Disulfide bond</keyword>
<keyword id="KW-1185">Reference proteome</keyword>
<keyword id="KW-0964">Secreted</keyword>
<keyword id="KW-0732">Signal</keyword>
<reference key="1">
    <citation type="journal article" date="1986" name="DNA">
        <title>Molecular cloning and expression in Escherichia coli of equine type I interferons.</title>
        <authorList>
            <person name="Himmler A."/>
            <person name="Hauptmann R."/>
            <person name="Adolf G.R."/>
            <person name="Swetly P."/>
        </authorList>
    </citation>
    <scope>NUCLEOTIDE SEQUENCE [GENOMIC DNA]</scope>
</reference>
<protein>
    <recommendedName>
        <fullName>Interferon alpha-1</fullName>
    </recommendedName>
</protein>
<feature type="signal peptide">
    <location>
        <begin position="1"/>
        <end position="23"/>
    </location>
</feature>
<feature type="chain" id="PRO_0000016371" description="Interferon alpha-1">
    <location>
        <begin position="24"/>
        <end position="184"/>
    </location>
</feature>
<feature type="disulfide bond" evidence="1">
    <location>
        <begin position="24"/>
        <end position="122"/>
    </location>
</feature>
<feature type="disulfide bond" evidence="1">
    <location>
        <begin position="52"/>
        <end position="162"/>
    </location>
</feature>
<evidence type="ECO:0000250" key="1"/>
<evidence type="ECO:0000250" key="2">
    <source>
        <dbReference type="UniProtKB" id="P01562"/>
    </source>
</evidence>
<evidence type="ECO:0000305" key="3"/>
<accession>P05003</accession>
<proteinExistence type="inferred from homology"/>